<accession>Q7U8K0</accession>
<comment type="function">
    <text evidence="1">Specifically methylates position 2 of adenine 2503 in 23S rRNA and position 2 of adenine 37 in tRNAs.</text>
</comment>
<comment type="catalytic activity">
    <reaction evidence="1">
        <text>adenosine(2503) in 23S rRNA + 2 reduced [2Fe-2S]-[ferredoxin] + 2 S-adenosyl-L-methionine = 2-methyladenosine(2503) in 23S rRNA + 5'-deoxyadenosine + L-methionine + 2 oxidized [2Fe-2S]-[ferredoxin] + S-adenosyl-L-homocysteine</text>
        <dbReference type="Rhea" id="RHEA:42916"/>
        <dbReference type="Rhea" id="RHEA-COMP:10000"/>
        <dbReference type="Rhea" id="RHEA-COMP:10001"/>
        <dbReference type="Rhea" id="RHEA-COMP:10152"/>
        <dbReference type="Rhea" id="RHEA-COMP:10282"/>
        <dbReference type="ChEBI" id="CHEBI:17319"/>
        <dbReference type="ChEBI" id="CHEBI:33737"/>
        <dbReference type="ChEBI" id="CHEBI:33738"/>
        <dbReference type="ChEBI" id="CHEBI:57844"/>
        <dbReference type="ChEBI" id="CHEBI:57856"/>
        <dbReference type="ChEBI" id="CHEBI:59789"/>
        <dbReference type="ChEBI" id="CHEBI:74411"/>
        <dbReference type="ChEBI" id="CHEBI:74497"/>
        <dbReference type="EC" id="2.1.1.192"/>
    </reaction>
</comment>
<comment type="catalytic activity">
    <reaction evidence="1">
        <text>adenosine(37) in tRNA + 2 reduced [2Fe-2S]-[ferredoxin] + 2 S-adenosyl-L-methionine = 2-methyladenosine(37) in tRNA + 5'-deoxyadenosine + L-methionine + 2 oxidized [2Fe-2S]-[ferredoxin] + S-adenosyl-L-homocysteine</text>
        <dbReference type="Rhea" id="RHEA:43332"/>
        <dbReference type="Rhea" id="RHEA-COMP:10000"/>
        <dbReference type="Rhea" id="RHEA-COMP:10001"/>
        <dbReference type="Rhea" id="RHEA-COMP:10162"/>
        <dbReference type="Rhea" id="RHEA-COMP:10485"/>
        <dbReference type="ChEBI" id="CHEBI:17319"/>
        <dbReference type="ChEBI" id="CHEBI:33737"/>
        <dbReference type="ChEBI" id="CHEBI:33738"/>
        <dbReference type="ChEBI" id="CHEBI:57844"/>
        <dbReference type="ChEBI" id="CHEBI:57856"/>
        <dbReference type="ChEBI" id="CHEBI:59789"/>
        <dbReference type="ChEBI" id="CHEBI:74411"/>
        <dbReference type="ChEBI" id="CHEBI:74497"/>
        <dbReference type="EC" id="2.1.1.192"/>
    </reaction>
</comment>
<comment type="cofactor">
    <cofactor evidence="1">
        <name>[4Fe-4S] cluster</name>
        <dbReference type="ChEBI" id="CHEBI:49883"/>
    </cofactor>
    <text evidence="1">Binds 1 [4Fe-4S] cluster. The cluster is coordinated with 3 cysteines and an exchangeable S-adenosyl-L-methionine.</text>
</comment>
<comment type="subcellular location">
    <subcellularLocation>
        <location evidence="1">Cytoplasm</location>
    </subcellularLocation>
</comment>
<comment type="miscellaneous">
    <text evidence="1">Reaction proceeds by a ping-pong mechanism involving intermediate methylation of a conserved cysteine residue.</text>
</comment>
<comment type="similarity">
    <text evidence="1">Belongs to the radical SAM superfamily. RlmN family.</text>
</comment>
<protein>
    <recommendedName>
        <fullName evidence="1">Probable dual-specificity RNA methyltransferase RlmN</fullName>
        <ecNumber evidence="1">2.1.1.192</ecNumber>
    </recommendedName>
    <alternativeName>
        <fullName evidence="1">23S rRNA (adenine(2503)-C(2))-methyltransferase</fullName>
    </alternativeName>
    <alternativeName>
        <fullName evidence="1">23S rRNA m2A2503 methyltransferase</fullName>
    </alternativeName>
    <alternativeName>
        <fullName evidence="1">Ribosomal RNA large subunit methyltransferase N</fullName>
    </alternativeName>
    <alternativeName>
        <fullName evidence="1">tRNA (adenine(37)-C(2))-methyltransferase</fullName>
    </alternativeName>
    <alternativeName>
        <fullName evidence="1">tRNA m2A37 methyltransferase</fullName>
    </alternativeName>
</protein>
<sequence length="344" mass="37932">MLLGRSAAELESWAVAQGQKPFRGRQLHDWLYAKGARSLSEITVLPKAWRESLKEDGVEVGRLKEVHRSVAADATTKLLLSTDDGETIETVGIPTDQRLTVCVSSQVGCPMACRFCATGKGGLQRSLRTHEIVDQVLSVREVMDRRPSHIVFMGMGEPLLNSQAVLDAIRCLNDDLGIGQRRITVSTVGVPKTLPQLAELALATLGRAQFTLAVSLHAPNQALREELIPTAHAYPYEALLEDCRHYLAVTGRRVSFEYILLGGLNDAPEHAAELADRVGGFQSHVNLIAYNPIEEEEFQRPTRARIEGFQRVLERRGVAVSLRASRGLDQNAACGQLRRRRQGS</sequence>
<gene>
    <name evidence="1" type="primary">rlmN</name>
    <name type="ordered locus">SYNW0617</name>
</gene>
<keyword id="KW-0004">4Fe-4S</keyword>
<keyword id="KW-0963">Cytoplasm</keyword>
<keyword id="KW-1015">Disulfide bond</keyword>
<keyword id="KW-0408">Iron</keyword>
<keyword id="KW-0411">Iron-sulfur</keyword>
<keyword id="KW-0479">Metal-binding</keyword>
<keyword id="KW-0489">Methyltransferase</keyword>
<keyword id="KW-0698">rRNA processing</keyword>
<keyword id="KW-0949">S-adenosyl-L-methionine</keyword>
<keyword id="KW-0808">Transferase</keyword>
<keyword id="KW-0819">tRNA processing</keyword>
<feature type="chain" id="PRO_0000350490" description="Probable dual-specificity RNA methyltransferase RlmN">
    <location>
        <begin position="1"/>
        <end position="344"/>
    </location>
</feature>
<feature type="domain" description="Radical SAM core" evidence="2">
    <location>
        <begin position="95"/>
        <end position="329"/>
    </location>
</feature>
<feature type="active site" description="Proton acceptor" evidence="1">
    <location>
        <position position="89"/>
    </location>
</feature>
<feature type="active site" description="S-methylcysteine intermediate" evidence="1">
    <location>
        <position position="334"/>
    </location>
</feature>
<feature type="binding site" evidence="1">
    <location>
        <position position="109"/>
    </location>
    <ligand>
        <name>[4Fe-4S] cluster</name>
        <dbReference type="ChEBI" id="CHEBI:49883"/>
        <note>4Fe-4S-S-AdoMet</note>
    </ligand>
</feature>
<feature type="binding site" evidence="1">
    <location>
        <position position="113"/>
    </location>
    <ligand>
        <name>[4Fe-4S] cluster</name>
        <dbReference type="ChEBI" id="CHEBI:49883"/>
        <note>4Fe-4S-S-AdoMet</note>
    </ligand>
</feature>
<feature type="binding site" evidence="1">
    <location>
        <position position="116"/>
    </location>
    <ligand>
        <name>[4Fe-4S] cluster</name>
        <dbReference type="ChEBI" id="CHEBI:49883"/>
        <note>4Fe-4S-S-AdoMet</note>
    </ligand>
</feature>
<feature type="binding site" evidence="1">
    <location>
        <begin position="156"/>
        <end position="157"/>
    </location>
    <ligand>
        <name>S-adenosyl-L-methionine</name>
        <dbReference type="ChEBI" id="CHEBI:59789"/>
    </ligand>
</feature>
<feature type="binding site" evidence="1">
    <location>
        <position position="186"/>
    </location>
    <ligand>
        <name>S-adenosyl-L-methionine</name>
        <dbReference type="ChEBI" id="CHEBI:59789"/>
    </ligand>
</feature>
<feature type="binding site" evidence="1">
    <location>
        <begin position="215"/>
        <end position="217"/>
    </location>
    <ligand>
        <name>S-adenosyl-L-methionine</name>
        <dbReference type="ChEBI" id="CHEBI:59789"/>
    </ligand>
</feature>
<feature type="binding site" evidence="1">
    <location>
        <position position="291"/>
    </location>
    <ligand>
        <name>S-adenosyl-L-methionine</name>
        <dbReference type="ChEBI" id="CHEBI:59789"/>
    </ligand>
</feature>
<feature type="disulfide bond" description="(transient)" evidence="1">
    <location>
        <begin position="102"/>
        <end position="334"/>
    </location>
</feature>
<name>RLMN_PARMW</name>
<reference key="1">
    <citation type="journal article" date="2003" name="Nature">
        <title>The genome of a motile marine Synechococcus.</title>
        <authorList>
            <person name="Palenik B."/>
            <person name="Brahamsha B."/>
            <person name="Larimer F.W."/>
            <person name="Land M.L."/>
            <person name="Hauser L."/>
            <person name="Chain P."/>
            <person name="Lamerdin J.E."/>
            <person name="Regala W."/>
            <person name="Allen E.E."/>
            <person name="McCarren J."/>
            <person name="Paulsen I.T."/>
            <person name="Dufresne A."/>
            <person name="Partensky F."/>
            <person name="Webb E.A."/>
            <person name="Waterbury J."/>
        </authorList>
    </citation>
    <scope>NUCLEOTIDE SEQUENCE [LARGE SCALE GENOMIC DNA]</scope>
    <source>
        <strain>WH8102</strain>
    </source>
</reference>
<dbReference type="EC" id="2.1.1.192" evidence="1"/>
<dbReference type="EMBL" id="BX569690">
    <property type="protein sequence ID" value="CAE07132.1"/>
    <property type="molecule type" value="Genomic_DNA"/>
</dbReference>
<dbReference type="SMR" id="Q7U8K0"/>
<dbReference type="STRING" id="84588.SYNW0617"/>
<dbReference type="KEGG" id="syw:SYNW0617"/>
<dbReference type="eggNOG" id="COG0820">
    <property type="taxonomic scope" value="Bacteria"/>
</dbReference>
<dbReference type="HOGENOM" id="CLU_029101_1_1_3"/>
<dbReference type="Proteomes" id="UP000001422">
    <property type="component" value="Chromosome"/>
</dbReference>
<dbReference type="GO" id="GO:0005737">
    <property type="term" value="C:cytoplasm"/>
    <property type="evidence" value="ECO:0007669"/>
    <property type="project" value="UniProtKB-SubCell"/>
</dbReference>
<dbReference type="GO" id="GO:0051539">
    <property type="term" value="F:4 iron, 4 sulfur cluster binding"/>
    <property type="evidence" value="ECO:0007669"/>
    <property type="project" value="UniProtKB-UniRule"/>
</dbReference>
<dbReference type="GO" id="GO:0046872">
    <property type="term" value="F:metal ion binding"/>
    <property type="evidence" value="ECO:0007669"/>
    <property type="project" value="UniProtKB-KW"/>
</dbReference>
<dbReference type="GO" id="GO:0070040">
    <property type="term" value="F:rRNA (adenine(2503)-C2-)-methyltransferase activity"/>
    <property type="evidence" value="ECO:0007669"/>
    <property type="project" value="UniProtKB-UniRule"/>
</dbReference>
<dbReference type="GO" id="GO:0019843">
    <property type="term" value="F:rRNA binding"/>
    <property type="evidence" value="ECO:0007669"/>
    <property type="project" value="UniProtKB-UniRule"/>
</dbReference>
<dbReference type="GO" id="GO:0002935">
    <property type="term" value="F:tRNA (adenine(37)-C2)-methyltransferase activity"/>
    <property type="evidence" value="ECO:0007669"/>
    <property type="project" value="UniProtKB-UniRule"/>
</dbReference>
<dbReference type="GO" id="GO:0000049">
    <property type="term" value="F:tRNA binding"/>
    <property type="evidence" value="ECO:0007669"/>
    <property type="project" value="UniProtKB-UniRule"/>
</dbReference>
<dbReference type="GO" id="GO:0070475">
    <property type="term" value="P:rRNA base methylation"/>
    <property type="evidence" value="ECO:0007669"/>
    <property type="project" value="UniProtKB-UniRule"/>
</dbReference>
<dbReference type="GO" id="GO:0030488">
    <property type="term" value="P:tRNA methylation"/>
    <property type="evidence" value="ECO:0007669"/>
    <property type="project" value="UniProtKB-UniRule"/>
</dbReference>
<dbReference type="CDD" id="cd01335">
    <property type="entry name" value="Radical_SAM"/>
    <property type="match status" value="1"/>
</dbReference>
<dbReference type="FunFam" id="3.20.20.70:FF:000014">
    <property type="entry name" value="Probable dual-specificity RNA methyltransferase RlmN"/>
    <property type="match status" value="1"/>
</dbReference>
<dbReference type="Gene3D" id="1.10.150.530">
    <property type="match status" value="1"/>
</dbReference>
<dbReference type="Gene3D" id="3.20.20.70">
    <property type="entry name" value="Aldolase class I"/>
    <property type="match status" value="1"/>
</dbReference>
<dbReference type="HAMAP" id="MF_01849">
    <property type="entry name" value="RNA_methyltr_RlmN"/>
    <property type="match status" value="1"/>
</dbReference>
<dbReference type="InterPro" id="IPR013785">
    <property type="entry name" value="Aldolase_TIM"/>
</dbReference>
<dbReference type="InterPro" id="IPR040072">
    <property type="entry name" value="Methyltransferase_A"/>
</dbReference>
<dbReference type="InterPro" id="IPR048641">
    <property type="entry name" value="RlmN_N"/>
</dbReference>
<dbReference type="InterPro" id="IPR027492">
    <property type="entry name" value="RNA_MTrfase_RlmN"/>
</dbReference>
<dbReference type="InterPro" id="IPR004383">
    <property type="entry name" value="rRNA_lsu_MTrfase_RlmN/Cfr"/>
</dbReference>
<dbReference type="InterPro" id="IPR007197">
    <property type="entry name" value="rSAM"/>
</dbReference>
<dbReference type="NCBIfam" id="TIGR00048">
    <property type="entry name" value="rRNA_mod_RlmN"/>
    <property type="match status" value="1"/>
</dbReference>
<dbReference type="PANTHER" id="PTHR30544">
    <property type="entry name" value="23S RRNA METHYLTRANSFERASE"/>
    <property type="match status" value="1"/>
</dbReference>
<dbReference type="PANTHER" id="PTHR30544:SF5">
    <property type="entry name" value="RADICAL SAM CORE DOMAIN-CONTAINING PROTEIN"/>
    <property type="match status" value="1"/>
</dbReference>
<dbReference type="Pfam" id="PF04055">
    <property type="entry name" value="Radical_SAM"/>
    <property type="match status" value="1"/>
</dbReference>
<dbReference type="Pfam" id="PF21016">
    <property type="entry name" value="RlmN_N"/>
    <property type="match status" value="1"/>
</dbReference>
<dbReference type="PIRSF" id="PIRSF006004">
    <property type="entry name" value="CHP00048"/>
    <property type="match status" value="1"/>
</dbReference>
<dbReference type="SFLD" id="SFLDF00275">
    <property type="entry name" value="adenosine_C2_methyltransferase"/>
    <property type="match status" value="1"/>
</dbReference>
<dbReference type="SFLD" id="SFLDG01062">
    <property type="entry name" value="methyltransferase_(Class_A)"/>
    <property type="match status" value="1"/>
</dbReference>
<dbReference type="SUPFAM" id="SSF102114">
    <property type="entry name" value="Radical SAM enzymes"/>
    <property type="match status" value="1"/>
</dbReference>
<dbReference type="PROSITE" id="PS51918">
    <property type="entry name" value="RADICAL_SAM"/>
    <property type="match status" value="1"/>
</dbReference>
<evidence type="ECO:0000255" key="1">
    <source>
        <dbReference type="HAMAP-Rule" id="MF_01849"/>
    </source>
</evidence>
<evidence type="ECO:0000255" key="2">
    <source>
        <dbReference type="PROSITE-ProRule" id="PRU01266"/>
    </source>
</evidence>
<proteinExistence type="inferred from homology"/>
<organism>
    <name type="scientific">Parasynechococcus marenigrum (strain WH8102)</name>
    <dbReference type="NCBI Taxonomy" id="84588"/>
    <lineage>
        <taxon>Bacteria</taxon>
        <taxon>Bacillati</taxon>
        <taxon>Cyanobacteriota</taxon>
        <taxon>Cyanophyceae</taxon>
        <taxon>Synechococcales</taxon>
        <taxon>Prochlorococcaceae</taxon>
        <taxon>Parasynechococcus</taxon>
        <taxon>Parasynechococcus marenigrum</taxon>
    </lineage>
</organism>